<gene>
    <name evidence="1" type="primary">guaA</name>
    <name type="ordered locus">LCA_0139</name>
</gene>
<keyword id="KW-0067">ATP-binding</keyword>
<keyword id="KW-0315">Glutamine amidotransferase</keyword>
<keyword id="KW-0332">GMP biosynthesis</keyword>
<keyword id="KW-0436">Ligase</keyword>
<keyword id="KW-0547">Nucleotide-binding</keyword>
<keyword id="KW-0658">Purine biosynthesis</keyword>
<keyword id="KW-1185">Reference proteome</keyword>
<evidence type="ECO:0000255" key="1">
    <source>
        <dbReference type="HAMAP-Rule" id="MF_00344"/>
    </source>
</evidence>
<protein>
    <recommendedName>
        <fullName evidence="1">GMP synthase [glutamine-hydrolyzing]</fullName>
        <ecNumber evidence="1">6.3.5.2</ecNumber>
    </recommendedName>
    <alternativeName>
        <fullName evidence="1">GMP synthetase</fullName>
    </alternativeName>
    <alternativeName>
        <fullName evidence="1">Glutamine amidotransferase</fullName>
    </alternativeName>
</protein>
<proteinExistence type="inferred from homology"/>
<reference key="1">
    <citation type="journal article" date="2005" name="Nat. Biotechnol.">
        <title>The complete genome sequence of the meat-borne lactic acid bacterium Lactobacillus sakei 23K.</title>
        <authorList>
            <person name="Chaillou S."/>
            <person name="Champomier-Verges M.-C."/>
            <person name="Cornet M."/>
            <person name="Crutz-Le Coq A.-M."/>
            <person name="Dudez A.-M."/>
            <person name="Martin V."/>
            <person name="Beaufils S."/>
            <person name="Darbon-Rongere E."/>
            <person name="Bossy R."/>
            <person name="Loux V."/>
            <person name="Zagorec M."/>
        </authorList>
    </citation>
    <scope>NUCLEOTIDE SEQUENCE [LARGE SCALE GENOMIC DNA]</scope>
    <source>
        <strain>23K</strain>
    </source>
</reference>
<feature type="chain" id="PRO_0000229436" description="GMP synthase [glutamine-hydrolyzing]">
    <location>
        <begin position="1"/>
        <end position="517"/>
    </location>
</feature>
<feature type="domain" description="Glutamine amidotransferase type-1" evidence="1">
    <location>
        <begin position="11"/>
        <end position="202"/>
    </location>
</feature>
<feature type="domain" description="GMPS ATP-PPase" evidence="1">
    <location>
        <begin position="203"/>
        <end position="392"/>
    </location>
</feature>
<feature type="active site" description="Nucleophile" evidence="1">
    <location>
        <position position="88"/>
    </location>
</feature>
<feature type="active site" evidence="1">
    <location>
        <position position="176"/>
    </location>
</feature>
<feature type="active site" evidence="1">
    <location>
        <position position="178"/>
    </location>
</feature>
<feature type="binding site" evidence="1">
    <location>
        <begin position="230"/>
        <end position="236"/>
    </location>
    <ligand>
        <name>ATP</name>
        <dbReference type="ChEBI" id="CHEBI:30616"/>
    </ligand>
</feature>
<sequence>MAQKDMQDFDKIIVLDYGSQYNQLITRRIREFGIFSELLPNTTTAAEIKKIAPKGIIFSGGPMSVYDGGAFSVDPEIFELGIPILGICYGMQLISFKNGGNVEASTEREYGKAEITVTDKDSDLFKGLPEKQTVWMSHGDKVTAIPEGYVTVAESDNTPFTAIENRDKHIYGIQFHTEVQNTEFGNDILKNFAFGVCGAQDNWTMNDFIDMQIEKIREQVGDKKVLLGLSGGVDSSVVGVLLHRAIGDQLVSIFVDHGLLRKGEVEQVMESLGGKFGLNIIQVDAKERFMSKLAGVSDPEKKRKIIGNEFIQVFDEEATKLNGIDFLAQGTLYTDIIESGTSTATTIKSHHNVGGLPEDMQFSLIEPLNTLFKDEVRDLGEKLGMPYELVWRQPFPGPGLGIRVLGEVTEDKLKIVRDSDLILREEFALAGLDKTVWQYFTVLPGIRSVGVMGDGRTYDYTVGIRAVNSIDGMTADFSRIPWDILQKVSVRIVNEVDHVNRIVYDITSKPPSTVEWE</sequence>
<dbReference type="EC" id="6.3.5.2" evidence="1"/>
<dbReference type="EMBL" id="CR936503">
    <property type="protein sequence ID" value="CAI54436.1"/>
    <property type="molecule type" value="Genomic_DNA"/>
</dbReference>
<dbReference type="SMR" id="Q38ZE1"/>
<dbReference type="STRING" id="314315.LCA_0139"/>
<dbReference type="MEROPS" id="C26.957"/>
<dbReference type="KEGG" id="lsa:LCA_0139"/>
<dbReference type="eggNOG" id="COG0519">
    <property type="taxonomic scope" value="Bacteria"/>
</dbReference>
<dbReference type="HOGENOM" id="CLU_014340_0_5_9"/>
<dbReference type="OrthoDB" id="9802219at2"/>
<dbReference type="UniPathway" id="UPA00189">
    <property type="reaction ID" value="UER00296"/>
</dbReference>
<dbReference type="Proteomes" id="UP000002707">
    <property type="component" value="Chromosome"/>
</dbReference>
<dbReference type="GO" id="GO:0005829">
    <property type="term" value="C:cytosol"/>
    <property type="evidence" value="ECO:0007669"/>
    <property type="project" value="TreeGrafter"/>
</dbReference>
<dbReference type="GO" id="GO:0005524">
    <property type="term" value="F:ATP binding"/>
    <property type="evidence" value="ECO:0007669"/>
    <property type="project" value="UniProtKB-UniRule"/>
</dbReference>
<dbReference type="GO" id="GO:0003921">
    <property type="term" value="F:GMP synthase activity"/>
    <property type="evidence" value="ECO:0007669"/>
    <property type="project" value="InterPro"/>
</dbReference>
<dbReference type="CDD" id="cd01742">
    <property type="entry name" value="GATase1_GMP_Synthase"/>
    <property type="match status" value="1"/>
</dbReference>
<dbReference type="CDD" id="cd01997">
    <property type="entry name" value="GMP_synthase_C"/>
    <property type="match status" value="1"/>
</dbReference>
<dbReference type="FunFam" id="3.30.300.10:FF:000002">
    <property type="entry name" value="GMP synthase [glutamine-hydrolyzing]"/>
    <property type="match status" value="1"/>
</dbReference>
<dbReference type="FunFam" id="3.40.50.620:FF:000001">
    <property type="entry name" value="GMP synthase [glutamine-hydrolyzing]"/>
    <property type="match status" value="1"/>
</dbReference>
<dbReference type="FunFam" id="3.40.50.880:FF:000001">
    <property type="entry name" value="GMP synthase [glutamine-hydrolyzing]"/>
    <property type="match status" value="1"/>
</dbReference>
<dbReference type="Gene3D" id="3.30.300.10">
    <property type="match status" value="1"/>
</dbReference>
<dbReference type="Gene3D" id="3.40.50.880">
    <property type="match status" value="1"/>
</dbReference>
<dbReference type="Gene3D" id="3.40.50.620">
    <property type="entry name" value="HUPs"/>
    <property type="match status" value="1"/>
</dbReference>
<dbReference type="HAMAP" id="MF_00344">
    <property type="entry name" value="GMP_synthase"/>
    <property type="match status" value="1"/>
</dbReference>
<dbReference type="InterPro" id="IPR029062">
    <property type="entry name" value="Class_I_gatase-like"/>
</dbReference>
<dbReference type="InterPro" id="IPR017926">
    <property type="entry name" value="GATASE"/>
</dbReference>
<dbReference type="InterPro" id="IPR001674">
    <property type="entry name" value="GMP_synth_C"/>
</dbReference>
<dbReference type="InterPro" id="IPR004739">
    <property type="entry name" value="GMP_synth_GATase"/>
</dbReference>
<dbReference type="InterPro" id="IPR022955">
    <property type="entry name" value="GMP_synthase"/>
</dbReference>
<dbReference type="InterPro" id="IPR025777">
    <property type="entry name" value="GMPS_ATP_PPase_dom"/>
</dbReference>
<dbReference type="InterPro" id="IPR022310">
    <property type="entry name" value="NAD/GMP_synthase"/>
</dbReference>
<dbReference type="InterPro" id="IPR014729">
    <property type="entry name" value="Rossmann-like_a/b/a_fold"/>
</dbReference>
<dbReference type="NCBIfam" id="TIGR00884">
    <property type="entry name" value="guaA_Cterm"/>
    <property type="match status" value="1"/>
</dbReference>
<dbReference type="NCBIfam" id="TIGR00888">
    <property type="entry name" value="guaA_Nterm"/>
    <property type="match status" value="1"/>
</dbReference>
<dbReference type="NCBIfam" id="NF000848">
    <property type="entry name" value="PRK00074.1"/>
    <property type="match status" value="1"/>
</dbReference>
<dbReference type="PANTHER" id="PTHR11922:SF2">
    <property type="entry name" value="GMP SYNTHASE [GLUTAMINE-HYDROLYZING]"/>
    <property type="match status" value="1"/>
</dbReference>
<dbReference type="PANTHER" id="PTHR11922">
    <property type="entry name" value="GMP SYNTHASE-RELATED"/>
    <property type="match status" value="1"/>
</dbReference>
<dbReference type="Pfam" id="PF00117">
    <property type="entry name" value="GATase"/>
    <property type="match status" value="1"/>
</dbReference>
<dbReference type="Pfam" id="PF00958">
    <property type="entry name" value="GMP_synt_C"/>
    <property type="match status" value="1"/>
</dbReference>
<dbReference type="Pfam" id="PF02540">
    <property type="entry name" value="NAD_synthase"/>
    <property type="match status" value="1"/>
</dbReference>
<dbReference type="PRINTS" id="PR00099">
    <property type="entry name" value="CPSGATASE"/>
</dbReference>
<dbReference type="PRINTS" id="PR00096">
    <property type="entry name" value="GATASE"/>
</dbReference>
<dbReference type="SUPFAM" id="SSF52402">
    <property type="entry name" value="Adenine nucleotide alpha hydrolases-like"/>
    <property type="match status" value="1"/>
</dbReference>
<dbReference type="SUPFAM" id="SSF52317">
    <property type="entry name" value="Class I glutamine amidotransferase-like"/>
    <property type="match status" value="1"/>
</dbReference>
<dbReference type="SUPFAM" id="SSF54810">
    <property type="entry name" value="GMP synthetase C-terminal dimerisation domain"/>
    <property type="match status" value="1"/>
</dbReference>
<dbReference type="PROSITE" id="PS51273">
    <property type="entry name" value="GATASE_TYPE_1"/>
    <property type="match status" value="1"/>
</dbReference>
<dbReference type="PROSITE" id="PS51553">
    <property type="entry name" value="GMPS_ATP_PPASE"/>
    <property type="match status" value="1"/>
</dbReference>
<accession>Q38ZE1</accession>
<organism>
    <name type="scientific">Latilactobacillus sakei subsp. sakei (strain 23K)</name>
    <name type="common">Lactobacillus sakei subsp. sakei</name>
    <dbReference type="NCBI Taxonomy" id="314315"/>
    <lineage>
        <taxon>Bacteria</taxon>
        <taxon>Bacillati</taxon>
        <taxon>Bacillota</taxon>
        <taxon>Bacilli</taxon>
        <taxon>Lactobacillales</taxon>
        <taxon>Lactobacillaceae</taxon>
        <taxon>Latilactobacillus</taxon>
    </lineage>
</organism>
<comment type="function">
    <text evidence="1">Catalyzes the synthesis of GMP from XMP.</text>
</comment>
<comment type="catalytic activity">
    <reaction evidence="1">
        <text>XMP + L-glutamine + ATP + H2O = GMP + L-glutamate + AMP + diphosphate + 2 H(+)</text>
        <dbReference type="Rhea" id="RHEA:11680"/>
        <dbReference type="ChEBI" id="CHEBI:15377"/>
        <dbReference type="ChEBI" id="CHEBI:15378"/>
        <dbReference type="ChEBI" id="CHEBI:29985"/>
        <dbReference type="ChEBI" id="CHEBI:30616"/>
        <dbReference type="ChEBI" id="CHEBI:33019"/>
        <dbReference type="ChEBI" id="CHEBI:57464"/>
        <dbReference type="ChEBI" id="CHEBI:58115"/>
        <dbReference type="ChEBI" id="CHEBI:58359"/>
        <dbReference type="ChEBI" id="CHEBI:456215"/>
        <dbReference type="EC" id="6.3.5.2"/>
    </reaction>
</comment>
<comment type="pathway">
    <text evidence="1">Purine metabolism; GMP biosynthesis; GMP from XMP (L-Gln route): step 1/1.</text>
</comment>
<comment type="subunit">
    <text evidence="1">Homodimer.</text>
</comment>
<name>GUAA_LATSS</name>